<comment type="function">
    <text evidence="1">This is one of the proteins that bind and probably mediate the attachment of the 5S RNA into the large ribosomal subunit, where it forms part of the central protuberance. In the 70S ribosome it contacts protein S13 of the 30S subunit (bridge B1b), connecting the 2 subunits; this bridge is implicated in subunit movement. Contacts the P site tRNA; the 5S rRNA and some of its associated proteins might help stabilize positioning of ribosome-bound tRNAs.</text>
</comment>
<comment type="subunit">
    <text evidence="1">Part of the 50S ribosomal subunit; part of the 5S rRNA/L5/L18/L25 subcomplex. Contacts the 5S rRNA and the P site tRNA. Forms a bridge to the 30S subunit in the 70S ribosome.</text>
</comment>
<comment type="similarity">
    <text evidence="1">Belongs to the universal ribosomal protein uL5 family.</text>
</comment>
<name>RL5_ALKMQ</name>
<feature type="chain" id="PRO_1000067615" description="Large ribosomal subunit protein uL5">
    <location>
        <begin position="1"/>
        <end position="179"/>
    </location>
</feature>
<reference key="1">
    <citation type="journal article" date="2016" name="Genome Announc.">
        <title>Complete genome sequence of Alkaliphilus metalliredigens strain QYMF, an alkaliphilic and metal-reducing bacterium isolated from borax-contaminated leachate ponds.</title>
        <authorList>
            <person name="Hwang C."/>
            <person name="Copeland A."/>
            <person name="Lucas S."/>
            <person name="Lapidus A."/>
            <person name="Barry K."/>
            <person name="Detter J.C."/>
            <person name="Glavina Del Rio T."/>
            <person name="Hammon N."/>
            <person name="Israni S."/>
            <person name="Dalin E."/>
            <person name="Tice H."/>
            <person name="Pitluck S."/>
            <person name="Chertkov O."/>
            <person name="Brettin T."/>
            <person name="Bruce D."/>
            <person name="Han C."/>
            <person name="Schmutz J."/>
            <person name="Larimer F."/>
            <person name="Land M.L."/>
            <person name="Hauser L."/>
            <person name="Kyrpides N."/>
            <person name="Mikhailova N."/>
            <person name="Ye Q."/>
            <person name="Zhou J."/>
            <person name="Richardson P."/>
            <person name="Fields M.W."/>
        </authorList>
    </citation>
    <scope>NUCLEOTIDE SEQUENCE [LARGE SCALE GENOMIC DNA]</scope>
    <source>
        <strain>QYMF</strain>
    </source>
</reference>
<evidence type="ECO:0000255" key="1">
    <source>
        <dbReference type="HAMAP-Rule" id="MF_01333"/>
    </source>
</evidence>
<evidence type="ECO:0000305" key="2"/>
<dbReference type="EMBL" id="CP000724">
    <property type="protein sequence ID" value="ABR50538.1"/>
    <property type="molecule type" value="Genomic_DNA"/>
</dbReference>
<dbReference type="RefSeq" id="WP_012065429.1">
    <property type="nucleotide sequence ID" value="NC_009633.1"/>
</dbReference>
<dbReference type="SMR" id="A6TWH0"/>
<dbReference type="STRING" id="293826.Amet_4466"/>
<dbReference type="KEGG" id="amt:Amet_4466"/>
<dbReference type="eggNOG" id="COG0094">
    <property type="taxonomic scope" value="Bacteria"/>
</dbReference>
<dbReference type="HOGENOM" id="CLU_061015_2_1_9"/>
<dbReference type="OrthoDB" id="9806626at2"/>
<dbReference type="Proteomes" id="UP000001572">
    <property type="component" value="Chromosome"/>
</dbReference>
<dbReference type="GO" id="GO:1990904">
    <property type="term" value="C:ribonucleoprotein complex"/>
    <property type="evidence" value="ECO:0007669"/>
    <property type="project" value="UniProtKB-KW"/>
</dbReference>
<dbReference type="GO" id="GO:0005840">
    <property type="term" value="C:ribosome"/>
    <property type="evidence" value="ECO:0007669"/>
    <property type="project" value="UniProtKB-KW"/>
</dbReference>
<dbReference type="GO" id="GO:0019843">
    <property type="term" value="F:rRNA binding"/>
    <property type="evidence" value="ECO:0007669"/>
    <property type="project" value="UniProtKB-UniRule"/>
</dbReference>
<dbReference type="GO" id="GO:0003735">
    <property type="term" value="F:structural constituent of ribosome"/>
    <property type="evidence" value="ECO:0007669"/>
    <property type="project" value="InterPro"/>
</dbReference>
<dbReference type="GO" id="GO:0000049">
    <property type="term" value="F:tRNA binding"/>
    <property type="evidence" value="ECO:0007669"/>
    <property type="project" value="UniProtKB-UniRule"/>
</dbReference>
<dbReference type="GO" id="GO:0006412">
    <property type="term" value="P:translation"/>
    <property type="evidence" value="ECO:0007669"/>
    <property type="project" value="UniProtKB-UniRule"/>
</dbReference>
<dbReference type="FunFam" id="3.30.1440.10:FF:000001">
    <property type="entry name" value="50S ribosomal protein L5"/>
    <property type="match status" value="1"/>
</dbReference>
<dbReference type="Gene3D" id="3.30.1440.10">
    <property type="match status" value="1"/>
</dbReference>
<dbReference type="HAMAP" id="MF_01333_B">
    <property type="entry name" value="Ribosomal_uL5_B"/>
    <property type="match status" value="1"/>
</dbReference>
<dbReference type="InterPro" id="IPR002132">
    <property type="entry name" value="Ribosomal_uL5"/>
</dbReference>
<dbReference type="InterPro" id="IPR020930">
    <property type="entry name" value="Ribosomal_uL5_bac-type"/>
</dbReference>
<dbReference type="InterPro" id="IPR031309">
    <property type="entry name" value="Ribosomal_uL5_C"/>
</dbReference>
<dbReference type="InterPro" id="IPR020929">
    <property type="entry name" value="Ribosomal_uL5_CS"/>
</dbReference>
<dbReference type="InterPro" id="IPR022803">
    <property type="entry name" value="Ribosomal_uL5_dom_sf"/>
</dbReference>
<dbReference type="InterPro" id="IPR031310">
    <property type="entry name" value="Ribosomal_uL5_N"/>
</dbReference>
<dbReference type="NCBIfam" id="NF000585">
    <property type="entry name" value="PRK00010.1"/>
    <property type="match status" value="1"/>
</dbReference>
<dbReference type="PANTHER" id="PTHR11994">
    <property type="entry name" value="60S RIBOSOMAL PROTEIN L11-RELATED"/>
    <property type="match status" value="1"/>
</dbReference>
<dbReference type="Pfam" id="PF00281">
    <property type="entry name" value="Ribosomal_L5"/>
    <property type="match status" value="1"/>
</dbReference>
<dbReference type="Pfam" id="PF00673">
    <property type="entry name" value="Ribosomal_L5_C"/>
    <property type="match status" value="1"/>
</dbReference>
<dbReference type="PIRSF" id="PIRSF002161">
    <property type="entry name" value="Ribosomal_L5"/>
    <property type="match status" value="1"/>
</dbReference>
<dbReference type="SUPFAM" id="SSF55282">
    <property type="entry name" value="RL5-like"/>
    <property type="match status" value="1"/>
</dbReference>
<dbReference type="PROSITE" id="PS00358">
    <property type="entry name" value="RIBOSOMAL_L5"/>
    <property type="match status" value="1"/>
</dbReference>
<organism>
    <name type="scientific">Alkaliphilus metalliredigens (strain QYMF)</name>
    <dbReference type="NCBI Taxonomy" id="293826"/>
    <lineage>
        <taxon>Bacteria</taxon>
        <taxon>Bacillati</taxon>
        <taxon>Bacillota</taxon>
        <taxon>Clostridia</taxon>
        <taxon>Peptostreptococcales</taxon>
        <taxon>Natronincolaceae</taxon>
        <taxon>Alkaliphilus</taxon>
    </lineage>
</organism>
<keyword id="KW-1185">Reference proteome</keyword>
<keyword id="KW-0687">Ribonucleoprotein</keyword>
<keyword id="KW-0689">Ribosomal protein</keyword>
<keyword id="KW-0694">RNA-binding</keyword>
<keyword id="KW-0699">rRNA-binding</keyword>
<keyword id="KW-0820">tRNA-binding</keyword>
<accession>A6TWH0</accession>
<sequence length="179" mass="20253">MARIKDKYRNEVAPAMMEKFGYKSVMQIPRLEKIIINMGLGQAKENQKELEIAVKELGIIAGQKPITTKAKKSVANFKVREGMAVGAKTTLRGEKMYEFADRLINIALPRVRDFRGVNPNSFDGRGNYALGVKEQLIFPEIEYDKVDKVRGMDIILVTTANSDEESRELLRLLGMPFTK</sequence>
<proteinExistence type="inferred from homology"/>
<protein>
    <recommendedName>
        <fullName evidence="1">Large ribosomal subunit protein uL5</fullName>
    </recommendedName>
    <alternativeName>
        <fullName evidence="2">50S ribosomal protein L5</fullName>
    </alternativeName>
</protein>
<gene>
    <name evidence="1" type="primary">rplE</name>
    <name type="ordered locus">Amet_4466</name>
</gene>